<proteinExistence type="inferred from homology"/>
<comment type="subcellular location">
    <subcellularLocation>
        <location evidence="2">Cell membrane</location>
        <topology evidence="2">Multi-pass membrane protein</topology>
    </subcellularLocation>
</comment>
<comment type="similarity">
    <text evidence="2">Belongs to the chloride channel (TC 2.A.49) family.</text>
</comment>
<feature type="chain" id="PRO_0000094500" description="Uncharacterized protein MJ0305">
    <location>
        <begin position="1"/>
        <end position="395"/>
    </location>
</feature>
<feature type="transmembrane region" description="Helical" evidence="1">
    <location>
        <begin position="19"/>
        <end position="39"/>
    </location>
</feature>
<feature type="transmembrane region" description="Helical" evidence="1">
    <location>
        <begin position="49"/>
        <end position="69"/>
    </location>
</feature>
<feature type="transmembrane region" description="Helical" evidence="1">
    <location>
        <begin position="87"/>
        <end position="107"/>
    </location>
</feature>
<feature type="transmembrane region" description="Helical" evidence="1">
    <location>
        <begin position="137"/>
        <end position="157"/>
    </location>
</feature>
<feature type="transmembrane region" description="Helical" evidence="1">
    <location>
        <begin position="172"/>
        <end position="192"/>
    </location>
</feature>
<feature type="transmembrane region" description="Helical" evidence="1">
    <location>
        <begin position="206"/>
        <end position="226"/>
    </location>
</feature>
<feature type="transmembrane region" description="Helical" evidence="1">
    <location>
        <begin position="252"/>
        <end position="272"/>
    </location>
</feature>
<feature type="transmembrane region" description="Helical" evidence="1">
    <location>
        <begin position="279"/>
        <end position="299"/>
    </location>
</feature>
<feature type="transmembrane region" description="Helical" evidence="1">
    <location>
        <begin position="311"/>
        <end position="331"/>
    </location>
</feature>
<feature type="transmembrane region" description="Helical" evidence="1">
    <location>
        <begin position="359"/>
        <end position="379"/>
    </location>
</feature>
<keyword id="KW-1003">Cell membrane</keyword>
<keyword id="KW-0868">Chloride</keyword>
<keyword id="KW-0869">Chloride channel</keyword>
<keyword id="KW-0407">Ion channel</keyword>
<keyword id="KW-0406">Ion transport</keyword>
<keyword id="KW-0472">Membrane</keyword>
<keyword id="KW-1185">Reference proteome</keyword>
<keyword id="KW-0812">Transmembrane</keyword>
<keyword id="KW-1133">Transmembrane helix</keyword>
<keyword id="KW-0813">Transport</keyword>
<evidence type="ECO:0000255" key="1"/>
<evidence type="ECO:0000305" key="2"/>
<name>Y305_METJA</name>
<accession>Q57753</accession>
<organism>
    <name type="scientific">Methanocaldococcus jannaschii (strain ATCC 43067 / DSM 2661 / JAL-1 / JCM 10045 / NBRC 100440)</name>
    <name type="common">Methanococcus jannaschii</name>
    <dbReference type="NCBI Taxonomy" id="243232"/>
    <lineage>
        <taxon>Archaea</taxon>
        <taxon>Methanobacteriati</taxon>
        <taxon>Methanobacteriota</taxon>
        <taxon>Methanomada group</taxon>
        <taxon>Methanococci</taxon>
        <taxon>Methanococcales</taxon>
        <taxon>Methanocaldococcaceae</taxon>
        <taxon>Methanocaldococcus</taxon>
    </lineage>
</organism>
<sequence>MPMNIVNMFGKYIKIIKWIGIASLIGIVGGLSSVIIAIIIEYFPEKHNVLLIPIVFFIAGLFVDYIYELKGSGIDRVLKALNTNEKLTWIRGLLKVLLAGAVIAVGGSAGKEGPCVQSSASFADELYRLLKLKNRELVIITGIAGGLGGAFSAPLGTAILACEIIEHENFNYINLIPPIIASVVGYLIFYLITGRKHLFNITLSYTINIHDFLLFILGAFFCSLIAHCYIKTYRKISSTFDNLKIPYCIKTLIGGILVAVISYFIPEVMGMGLTLTKELFIMEFSLVFLVLLLIGKILATSFTVGSGTPGGLVFPSMCIGAISGIIFGSLIGDCSAPYIVLGIATTLSATTNAPLGGAVLCTEIFGFDFAVPASIGAVIGYQMTKLETIFKYIRF</sequence>
<reference key="1">
    <citation type="journal article" date="1996" name="Science">
        <title>Complete genome sequence of the methanogenic archaeon, Methanococcus jannaschii.</title>
        <authorList>
            <person name="Bult C.J."/>
            <person name="White O."/>
            <person name="Olsen G.J."/>
            <person name="Zhou L."/>
            <person name="Fleischmann R.D."/>
            <person name="Sutton G.G."/>
            <person name="Blake J.A."/>
            <person name="FitzGerald L.M."/>
            <person name="Clayton R.A."/>
            <person name="Gocayne J.D."/>
            <person name="Kerlavage A.R."/>
            <person name="Dougherty B.A."/>
            <person name="Tomb J.-F."/>
            <person name="Adams M.D."/>
            <person name="Reich C.I."/>
            <person name="Overbeek R."/>
            <person name="Kirkness E.F."/>
            <person name="Weinstock K.G."/>
            <person name="Merrick J.M."/>
            <person name="Glodek A."/>
            <person name="Scott J.L."/>
            <person name="Geoghagen N.S.M."/>
            <person name="Weidman J.F."/>
            <person name="Fuhrmann J.L."/>
            <person name="Nguyen D."/>
            <person name="Utterback T.R."/>
            <person name="Kelley J.M."/>
            <person name="Peterson J.D."/>
            <person name="Sadow P.W."/>
            <person name="Hanna M.C."/>
            <person name="Cotton M.D."/>
            <person name="Roberts K.M."/>
            <person name="Hurst M.A."/>
            <person name="Kaine B.P."/>
            <person name="Borodovsky M."/>
            <person name="Klenk H.-P."/>
            <person name="Fraser C.M."/>
            <person name="Smith H.O."/>
            <person name="Woese C.R."/>
            <person name="Venter J.C."/>
        </authorList>
    </citation>
    <scope>NUCLEOTIDE SEQUENCE [LARGE SCALE GENOMIC DNA]</scope>
    <source>
        <strain>ATCC 43067 / DSM 2661 / JAL-1 / JCM 10045 / NBRC 100440</strain>
    </source>
</reference>
<dbReference type="EMBL" id="L77117">
    <property type="protein sequence ID" value="AAB98292.1"/>
    <property type="molecule type" value="Genomic_DNA"/>
</dbReference>
<dbReference type="PIR" id="B64338">
    <property type="entry name" value="B64338"/>
</dbReference>
<dbReference type="RefSeq" id="WP_010869803.1">
    <property type="nucleotide sequence ID" value="NC_000909.1"/>
</dbReference>
<dbReference type="SMR" id="Q57753"/>
<dbReference type="FunCoup" id="Q57753">
    <property type="interactions" value="11"/>
</dbReference>
<dbReference type="STRING" id="243232.MJ_0305"/>
<dbReference type="TCDB" id="2.A.49.4.1">
    <property type="family name" value="the chloride carrier/channel (clc) family"/>
</dbReference>
<dbReference type="PaxDb" id="243232-MJ_0305"/>
<dbReference type="EnsemblBacteria" id="AAB98292">
    <property type="protein sequence ID" value="AAB98292"/>
    <property type="gene ID" value="MJ_0305"/>
</dbReference>
<dbReference type="GeneID" id="1451160"/>
<dbReference type="KEGG" id="mja:MJ_0305"/>
<dbReference type="eggNOG" id="arCOG02569">
    <property type="taxonomic scope" value="Archaea"/>
</dbReference>
<dbReference type="HOGENOM" id="CLU_015263_5_3_2"/>
<dbReference type="InParanoid" id="Q57753"/>
<dbReference type="OrthoDB" id="89900at2157"/>
<dbReference type="PhylomeDB" id="Q57753"/>
<dbReference type="Proteomes" id="UP000000805">
    <property type="component" value="Chromosome"/>
</dbReference>
<dbReference type="GO" id="GO:0034707">
    <property type="term" value="C:chloride channel complex"/>
    <property type="evidence" value="ECO:0007669"/>
    <property type="project" value="UniProtKB-KW"/>
</dbReference>
<dbReference type="GO" id="GO:0005886">
    <property type="term" value="C:plasma membrane"/>
    <property type="evidence" value="ECO:0007669"/>
    <property type="project" value="UniProtKB-SubCell"/>
</dbReference>
<dbReference type="GO" id="GO:0005254">
    <property type="term" value="F:chloride channel activity"/>
    <property type="evidence" value="ECO:0007669"/>
    <property type="project" value="UniProtKB-KW"/>
</dbReference>
<dbReference type="CDD" id="cd00400">
    <property type="entry name" value="Voltage_gated_ClC"/>
    <property type="match status" value="1"/>
</dbReference>
<dbReference type="Gene3D" id="1.10.3080.10">
    <property type="entry name" value="Clc chloride channel"/>
    <property type="match status" value="1"/>
</dbReference>
<dbReference type="InterPro" id="IPR014743">
    <property type="entry name" value="Cl-channel_core"/>
</dbReference>
<dbReference type="InterPro" id="IPR001807">
    <property type="entry name" value="ClC"/>
</dbReference>
<dbReference type="InterPro" id="IPR050368">
    <property type="entry name" value="ClC-type_chloride_channel"/>
</dbReference>
<dbReference type="PANTHER" id="PTHR43427">
    <property type="entry name" value="CHLORIDE CHANNEL PROTEIN CLC-E"/>
    <property type="match status" value="1"/>
</dbReference>
<dbReference type="PANTHER" id="PTHR43427:SF6">
    <property type="entry name" value="CHLORIDE CHANNEL PROTEIN CLC-E"/>
    <property type="match status" value="1"/>
</dbReference>
<dbReference type="Pfam" id="PF00654">
    <property type="entry name" value="Voltage_CLC"/>
    <property type="match status" value="1"/>
</dbReference>
<dbReference type="PRINTS" id="PR00762">
    <property type="entry name" value="CLCHANNEL"/>
</dbReference>
<dbReference type="SUPFAM" id="SSF81340">
    <property type="entry name" value="Clc chloride channel"/>
    <property type="match status" value="1"/>
</dbReference>
<protein>
    <recommendedName>
        <fullName>Uncharacterized protein MJ0305</fullName>
    </recommendedName>
</protein>
<gene>
    <name type="ordered locus">MJ0305</name>
</gene>